<feature type="chain" id="PRO_0000320470" description="Mitochondrial thiamine pyrophosphate carrier 1">
    <location>
        <begin position="1"/>
        <end position="333"/>
    </location>
</feature>
<feature type="transmembrane region" description="Helical; Name=1" evidence="2">
    <location>
        <begin position="17"/>
        <end position="35"/>
    </location>
</feature>
<feature type="transmembrane region" description="Helical; Name=2" evidence="2">
    <location>
        <begin position="96"/>
        <end position="112"/>
    </location>
</feature>
<feature type="transmembrane region" description="Helical; Name=3" evidence="2">
    <location>
        <begin position="135"/>
        <end position="155"/>
    </location>
</feature>
<feature type="transmembrane region" description="Helical; Name=4" evidence="2">
    <location>
        <begin position="190"/>
        <end position="209"/>
    </location>
</feature>
<feature type="transmembrane region" description="Helical; Name=5" evidence="2">
    <location>
        <begin position="221"/>
        <end position="238"/>
    </location>
</feature>
<feature type="transmembrane region" description="Helical; Name=6" evidence="2">
    <location>
        <begin position="293"/>
        <end position="310"/>
    </location>
</feature>
<feature type="repeat" description="Solcar 1">
    <location>
        <begin position="12"/>
        <end position="115"/>
    </location>
</feature>
<feature type="repeat" description="Solcar 2">
    <location>
        <begin position="129"/>
        <end position="215"/>
    </location>
</feature>
<feature type="repeat" description="Solcar 3">
    <location>
        <begin position="222"/>
        <end position="318"/>
    </location>
</feature>
<dbReference type="EMBL" id="CM002236">
    <property type="protein sequence ID" value="EAA29641.1"/>
    <property type="molecule type" value="Genomic_DNA"/>
</dbReference>
<dbReference type="RefSeq" id="XP_958877.1">
    <property type="nucleotide sequence ID" value="XM_953784.3"/>
</dbReference>
<dbReference type="SMR" id="Q7S2H8"/>
<dbReference type="FunCoup" id="Q7S2H8">
    <property type="interactions" value="28"/>
</dbReference>
<dbReference type="STRING" id="367110.Q7S2H8"/>
<dbReference type="PaxDb" id="5141-EFNCRP00000007314"/>
<dbReference type="EnsemblFungi" id="EAA29641">
    <property type="protein sequence ID" value="EAA29641"/>
    <property type="gene ID" value="NCU07384"/>
</dbReference>
<dbReference type="GeneID" id="3875015"/>
<dbReference type="KEGG" id="ncr:NCU07384"/>
<dbReference type="VEuPathDB" id="FungiDB:NCU07384"/>
<dbReference type="HOGENOM" id="CLU_015166_10_3_1"/>
<dbReference type="InParanoid" id="Q7S2H8"/>
<dbReference type="OMA" id="MYVCYGA"/>
<dbReference type="OrthoDB" id="18574at2759"/>
<dbReference type="Proteomes" id="UP000001805">
    <property type="component" value="Chromosome 1, Linkage Group I"/>
</dbReference>
<dbReference type="GO" id="GO:0005743">
    <property type="term" value="C:mitochondrial inner membrane"/>
    <property type="evidence" value="ECO:0000318"/>
    <property type="project" value="GO_Central"/>
</dbReference>
<dbReference type="GO" id="GO:0015234">
    <property type="term" value="F:thiamine transmembrane transporter activity"/>
    <property type="evidence" value="ECO:0000318"/>
    <property type="project" value="GO_Central"/>
</dbReference>
<dbReference type="GO" id="GO:0030974">
    <property type="term" value="P:thiamine pyrophosphate transmembrane transport"/>
    <property type="evidence" value="ECO:0000318"/>
    <property type="project" value="GO_Central"/>
</dbReference>
<dbReference type="FunFam" id="1.50.40.10:FF:000011">
    <property type="entry name" value="Mitochondrial thiamine pyrophosphate carrier 1"/>
    <property type="match status" value="1"/>
</dbReference>
<dbReference type="Gene3D" id="1.50.40.10">
    <property type="entry name" value="Mitochondrial carrier domain"/>
    <property type="match status" value="1"/>
</dbReference>
<dbReference type="InterPro" id="IPR002067">
    <property type="entry name" value="Mit_carrier"/>
</dbReference>
<dbReference type="InterPro" id="IPR018108">
    <property type="entry name" value="Mitochondrial_sb/sol_carrier"/>
</dbReference>
<dbReference type="InterPro" id="IPR023395">
    <property type="entry name" value="Mt_carrier_dom_sf"/>
</dbReference>
<dbReference type="PANTHER" id="PTHR24089">
    <property type="entry name" value="SOLUTE CARRIER FAMILY 25"/>
    <property type="match status" value="1"/>
</dbReference>
<dbReference type="Pfam" id="PF00153">
    <property type="entry name" value="Mito_carr"/>
    <property type="match status" value="3"/>
</dbReference>
<dbReference type="PRINTS" id="PR00926">
    <property type="entry name" value="MITOCARRIER"/>
</dbReference>
<dbReference type="SUPFAM" id="SSF103506">
    <property type="entry name" value="Mitochondrial carrier"/>
    <property type="match status" value="1"/>
</dbReference>
<dbReference type="PROSITE" id="PS50920">
    <property type="entry name" value="SOLCAR"/>
    <property type="match status" value="3"/>
</dbReference>
<comment type="function">
    <text evidence="1">Mitochondrial transporter that mediates uptake of thiamine pyrophosphate (ThPP) into mitochondria.</text>
</comment>
<comment type="subcellular location">
    <subcellularLocation>
        <location evidence="1">Mitochondrion inner membrane</location>
        <topology evidence="1">Multi-pass membrane protein</topology>
    </subcellularLocation>
</comment>
<comment type="similarity">
    <text evidence="3">Belongs to the mitochondrial carrier (TC 2.A.29) family.</text>
</comment>
<keyword id="KW-0472">Membrane</keyword>
<keyword id="KW-0496">Mitochondrion</keyword>
<keyword id="KW-0999">Mitochondrion inner membrane</keyword>
<keyword id="KW-1185">Reference proteome</keyword>
<keyword id="KW-0677">Repeat</keyword>
<keyword id="KW-0812">Transmembrane</keyword>
<keyword id="KW-1133">Transmembrane helix</keyword>
<keyword id="KW-0813">Transport</keyword>
<sequence length="333" mass="36097">MSGKAERLKDEGSRLQVTAAGATAGLISRFVIAPLDVVKIRLQLQHHSLSDPLLHQRRAEIIGGGPVYKGTLPTIRHILRTEGLTGLWKGNIPAELLYVSYAAVQFTTYRSITQFLQAAFPKDQNKQLPPSVESFIAGASAGGVATAVTYPLDLLRTRFAAQGVERVYPSLVQALKTIYASEGVTGYFRGLGPGLAQIIPYMGTFFCVYETLRPRLSKLELPYSSGSAVAGVLASVMAKTGTFPLDLVRKRIQVQGPTRGMYVHKNIPVYDGGMVKTVATIVRREGVRGLYRGLTVSLFKAAPASAVTMWTYERALKLYIRLGAAGPGRKEGV</sequence>
<reference key="1">
    <citation type="journal article" date="2003" name="Nature">
        <title>The genome sequence of the filamentous fungus Neurospora crassa.</title>
        <authorList>
            <person name="Galagan J.E."/>
            <person name="Calvo S.E."/>
            <person name="Borkovich K.A."/>
            <person name="Selker E.U."/>
            <person name="Read N.D."/>
            <person name="Jaffe D.B."/>
            <person name="FitzHugh W."/>
            <person name="Ma L.-J."/>
            <person name="Smirnov S."/>
            <person name="Purcell S."/>
            <person name="Rehman B."/>
            <person name="Elkins T."/>
            <person name="Engels R."/>
            <person name="Wang S."/>
            <person name="Nielsen C.B."/>
            <person name="Butler J."/>
            <person name="Endrizzi M."/>
            <person name="Qui D."/>
            <person name="Ianakiev P."/>
            <person name="Bell-Pedersen D."/>
            <person name="Nelson M.A."/>
            <person name="Werner-Washburne M."/>
            <person name="Selitrennikoff C.P."/>
            <person name="Kinsey J.A."/>
            <person name="Braun E.L."/>
            <person name="Zelter A."/>
            <person name="Schulte U."/>
            <person name="Kothe G.O."/>
            <person name="Jedd G."/>
            <person name="Mewes H.-W."/>
            <person name="Staben C."/>
            <person name="Marcotte E."/>
            <person name="Greenberg D."/>
            <person name="Roy A."/>
            <person name="Foley K."/>
            <person name="Naylor J."/>
            <person name="Stange-Thomann N."/>
            <person name="Barrett R."/>
            <person name="Gnerre S."/>
            <person name="Kamal M."/>
            <person name="Kamvysselis M."/>
            <person name="Mauceli E.W."/>
            <person name="Bielke C."/>
            <person name="Rudd S."/>
            <person name="Frishman D."/>
            <person name="Krystofova S."/>
            <person name="Rasmussen C."/>
            <person name="Metzenberg R.L."/>
            <person name="Perkins D.D."/>
            <person name="Kroken S."/>
            <person name="Cogoni C."/>
            <person name="Macino G."/>
            <person name="Catcheside D.E.A."/>
            <person name="Li W."/>
            <person name="Pratt R.J."/>
            <person name="Osmani S.A."/>
            <person name="DeSouza C.P.C."/>
            <person name="Glass N.L."/>
            <person name="Orbach M.J."/>
            <person name="Berglund J.A."/>
            <person name="Voelker R."/>
            <person name="Yarden O."/>
            <person name="Plamann M."/>
            <person name="Seiler S."/>
            <person name="Dunlap J.C."/>
            <person name="Radford A."/>
            <person name="Aramayo R."/>
            <person name="Natvig D.O."/>
            <person name="Alex L.A."/>
            <person name="Mannhaupt G."/>
            <person name="Ebbole D.J."/>
            <person name="Freitag M."/>
            <person name="Paulsen I."/>
            <person name="Sachs M.S."/>
            <person name="Lander E.S."/>
            <person name="Nusbaum C."/>
            <person name="Birren B.W."/>
        </authorList>
    </citation>
    <scope>NUCLEOTIDE SEQUENCE [LARGE SCALE GENOMIC DNA]</scope>
    <source>
        <strain>ATCC 24698 / 74-OR23-1A / CBS 708.71 / DSM 1257 / FGSC 987</strain>
    </source>
</reference>
<organism>
    <name type="scientific">Neurospora crassa (strain ATCC 24698 / 74-OR23-1A / CBS 708.71 / DSM 1257 / FGSC 987)</name>
    <dbReference type="NCBI Taxonomy" id="367110"/>
    <lineage>
        <taxon>Eukaryota</taxon>
        <taxon>Fungi</taxon>
        <taxon>Dikarya</taxon>
        <taxon>Ascomycota</taxon>
        <taxon>Pezizomycotina</taxon>
        <taxon>Sordariomycetes</taxon>
        <taxon>Sordariomycetidae</taxon>
        <taxon>Sordariales</taxon>
        <taxon>Sordariaceae</taxon>
        <taxon>Neurospora</taxon>
    </lineage>
</organism>
<gene>
    <name type="primary">tpc-1</name>
    <name type="ORF">NCU07384</name>
</gene>
<proteinExistence type="inferred from homology"/>
<accession>Q7S2H8</accession>
<evidence type="ECO:0000250" key="1"/>
<evidence type="ECO:0000255" key="2"/>
<evidence type="ECO:0000305" key="3"/>
<protein>
    <recommendedName>
        <fullName>Mitochondrial thiamine pyrophosphate carrier 1</fullName>
    </recommendedName>
</protein>
<name>TPC1_NEUCR</name>